<keyword id="KW-0030">Aminoacyl-tRNA synthetase</keyword>
<keyword id="KW-0067">ATP-binding</keyword>
<keyword id="KW-0963">Cytoplasm</keyword>
<keyword id="KW-0436">Ligase</keyword>
<keyword id="KW-0547">Nucleotide-binding</keyword>
<keyword id="KW-0648">Protein biosynthesis</keyword>
<keyword id="KW-1185">Reference proteome</keyword>
<feature type="chain" id="PRO_0000224634" description="Valine--tRNA ligase">
    <location>
        <begin position="1"/>
        <end position="831"/>
    </location>
</feature>
<feature type="short sequence motif" description="'HIGH' region">
    <location>
        <begin position="77"/>
        <end position="87"/>
    </location>
</feature>
<feature type="short sequence motif" description="'KMSKS' region">
    <location>
        <begin position="564"/>
        <end position="568"/>
    </location>
</feature>
<feature type="binding site" evidence="1">
    <location>
        <position position="567"/>
    </location>
    <ligand>
        <name>ATP</name>
        <dbReference type="ChEBI" id="CHEBI:30616"/>
    </ligand>
</feature>
<comment type="function">
    <text evidence="1">Catalyzes the attachment of valine to tRNA(Val). As ValRS can inadvertently accommodate and process structurally similar amino acids such as threonine, to avoid such errors, it has a 'posttransfer' editing activity that hydrolyzes mischarged Thr-tRNA(Val) in a tRNA-dependent manner.</text>
</comment>
<comment type="catalytic activity">
    <reaction evidence="1">
        <text>tRNA(Val) + L-valine + ATP = L-valyl-tRNA(Val) + AMP + diphosphate</text>
        <dbReference type="Rhea" id="RHEA:10704"/>
        <dbReference type="Rhea" id="RHEA-COMP:9672"/>
        <dbReference type="Rhea" id="RHEA-COMP:9708"/>
        <dbReference type="ChEBI" id="CHEBI:30616"/>
        <dbReference type="ChEBI" id="CHEBI:33019"/>
        <dbReference type="ChEBI" id="CHEBI:57762"/>
        <dbReference type="ChEBI" id="CHEBI:78442"/>
        <dbReference type="ChEBI" id="CHEBI:78537"/>
        <dbReference type="ChEBI" id="CHEBI:456215"/>
        <dbReference type="EC" id="6.1.1.9"/>
    </reaction>
</comment>
<comment type="subcellular location">
    <subcellularLocation>
        <location evidence="1">Cytoplasm</location>
    </subcellularLocation>
</comment>
<comment type="domain">
    <text evidence="1">ValRS has two distinct active sites: one for aminoacylation and one for editing. The misactivated threonine is translocated from the active site to the editing site.</text>
</comment>
<comment type="similarity">
    <text evidence="1">Belongs to the class-I aminoacyl-tRNA synthetase family. ValS type 2 subfamily.</text>
</comment>
<proteinExistence type="inferred from homology"/>
<evidence type="ECO:0000255" key="1">
    <source>
        <dbReference type="HAMAP-Rule" id="MF_02005"/>
    </source>
</evidence>
<accession>Q4J8X1</accession>
<dbReference type="EC" id="6.1.1.9" evidence="1"/>
<dbReference type="EMBL" id="CP000077">
    <property type="protein sequence ID" value="AAY80759.1"/>
    <property type="molecule type" value="Genomic_DNA"/>
</dbReference>
<dbReference type="RefSeq" id="WP_011278261.1">
    <property type="nucleotide sequence ID" value="NC_007181.1"/>
</dbReference>
<dbReference type="SMR" id="Q4J8X1"/>
<dbReference type="STRING" id="330779.Saci_1430"/>
<dbReference type="GeneID" id="14551929"/>
<dbReference type="KEGG" id="sai:Saci_1430"/>
<dbReference type="PATRIC" id="fig|330779.12.peg.1377"/>
<dbReference type="eggNOG" id="arCOG00808">
    <property type="taxonomic scope" value="Archaea"/>
</dbReference>
<dbReference type="HOGENOM" id="CLU_001493_0_2_2"/>
<dbReference type="Proteomes" id="UP000001018">
    <property type="component" value="Chromosome"/>
</dbReference>
<dbReference type="GO" id="GO:0005829">
    <property type="term" value="C:cytosol"/>
    <property type="evidence" value="ECO:0007669"/>
    <property type="project" value="TreeGrafter"/>
</dbReference>
<dbReference type="GO" id="GO:0002161">
    <property type="term" value="F:aminoacyl-tRNA deacylase activity"/>
    <property type="evidence" value="ECO:0007669"/>
    <property type="project" value="InterPro"/>
</dbReference>
<dbReference type="GO" id="GO:0005524">
    <property type="term" value="F:ATP binding"/>
    <property type="evidence" value="ECO:0007669"/>
    <property type="project" value="UniProtKB-UniRule"/>
</dbReference>
<dbReference type="GO" id="GO:0004832">
    <property type="term" value="F:valine-tRNA ligase activity"/>
    <property type="evidence" value="ECO:0007669"/>
    <property type="project" value="UniProtKB-UniRule"/>
</dbReference>
<dbReference type="GO" id="GO:0006438">
    <property type="term" value="P:valyl-tRNA aminoacylation"/>
    <property type="evidence" value="ECO:0007669"/>
    <property type="project" value="UniProtKB-UniRule"/>
</dbReference>
<dbReference type="CDD" id="cd07962">
    <property type="entry name" value="Anticodon_Ia_Val"/>
    <property type="match status" value="1"/>
</dbReference>
<dbReference type="CDD" id="cd00817">
    <property type="entry name" value="ValRS_core"/>
    <property type="match status" value="1"/>
</dbReference>
<dbReference type="FunFam" id="3.40.50.620:FF:000192">
    <property type="entry name" value="Valine--tRNA ligase"/>
    <property type="match status" value="1"/>
</dbReference>
<dbReference type="Gene3D" id="3.40.50.620">
    <property type="entry name" value="HUPs"/>
    <property type="match status" value="2"/>
</dbReference>
<dbReference type="Gene3D" id="1.10.730.10">
    <property type="entry name" value="Isoleucyl-tRNA Synthetase, Domain 1"/>
    <property type="match status" value="1"/>
</dbReference>
<dbReference type="Gene3D" id="3.90.740.10">
    <property type="entry name" value="Valyl/Leucyl/Isoleucyl-tRNA synthetase, editing domain"/>
    <property type="match status" value="1"/>
</dbReference>
<dbReference type="HAMAP" id="MF_02005">
    <property type="entry name" value="Val_tRNA_synth_type2"/>
    <property type="match status" value="1"/>
</dbReference>
<dbReference type="InterPro" id="IPR001412">
    <property type="entry name" value="aa-tRNA-synth_I_CS"/>
</dbReference>
<dbReference type="InterPro" id="IPR002300">
    <property type="entry name" value="aa-tRNA-synth_Ia"/>
</dbReference>
<dbReference type="InterPro" id="IPR033705">
    <property type="entry name" value="Anticodon_Ia_Val"/>
</dbReference>
<dbReference type="InterPro" id="IPR013155">
    <property type="entry name" value="M/V/L/I-tRNA-synth_anticd-bd"/>
</dbReference>
<dbReference type="InterPro" id="IPR014729">
    <property type="entry name" value="Rossmann-like_a/b/a_fold"/>
</dbReference>
<dbReference type="InterPro" id="IPR009080">
    <property type="entry name" value="tRNAsynth_Ia_anticodon-bd"/>
</dbReference>
<dbReference type="InterPro" id="IPR009008">
    <property type="entry name" value="Val/Leu/Ile-tRNA-synth_edit"/>
</dbReference>
<dbReference type="InterPro" id="IPR022874">
    <property type="entry name" value="Valine-tRNA_ligase_type_2"/>
</dbReference>
<dbReference type="InterPro" id="IPR002303">
    <property type="entry name" value="Valyl-tRNA_ligase"/>
</dbReference>
<dbReference type="NCBIfam" id="NF009687">
    <property type="entry name" value="PRK13208.1"/>
    <property type="match status" value="1"/>
</dbReference>
<dbReference type="NCBIfam" id="TIGR00422">
    <property type="entry name" value="valS"/>
    <property type="match status" value="1"/>
</dbReference>
<dbReference type="PANTHER" id="PTHR11946:SF93">
    <property type="entry name" value="VALINE--TRNA LIGASE, CHLOROPLASTIC_MITOCHONDRIAL 2"/>
    <property type="match status" value="1"/>
</dbReference>
<dbReference type="PANTHER" id="PTHR11946">
    <property type="entry name" value="VALYL-TRNA SYNTHETASES"/>
    <property type="match status" value="1"/>
</dbReference>
<dbReference type="Pfam" id="PF08264">
    <property type="entry name" value="Anticodon_1"/>
    <property type="match status" value="1"/>
</dbReference>
<dbReference type="Pfam" id="PF00133">
    <property type="entry name" value="tRNA-synt_1"/>
    <property type="match status" value="1"/>
</dbReference>
<dbReference type="PRINTS" id="PR00986">
    <property type="entry name" value="TRNASYNTHVAL"/>
</dbReference>
<dbReference type="SUPFAM" id="SSF47323">
    <property type="entry name" value="Anticodon-binding domain of a subclass of class I aminoacyl-tRNA synthetases"/>
    <property type="match status" value="1"/>
</dbReference>
<dbReference type="SUPFAM" id="SSF52374">
    <property type="entry name" value="Nucleotidylyl transferase"/>
    <property type="match status" value="1"/>
</dbReference>
<dbReference type="SUPFAM" id="SSF50677">
    <property type="entry name" value="ValRS/IleRS/LeuRS editing domain"/>
    <property type="match status" value="1"/>
</dbReference>
<dbReference type="PROSITE" id="PS00178">
    <property type="entry name" value="AA_TRNA_LIGASE_I"/>
    <property type="match status" value="1"/>
</dbReference>
<sequence>MTISALELISYYTKFLSMLSQDEINKKLEEWPKHYDPKGIELKWQNIWMTKEFWEKVFRFRDEDEKSPVFVIDTPPPFTSGELHMGHAYWVTISDTIGRFKRLEGYNVLLPQGWDTQGLPTELKVQYKLKVPKENRELFLKKCIEWTEDMIKSMRTAMIRLGYRAEWERFEYRTYESKYRRIIQKSLIDMHKMGLVEMREGPVYWCPKCETALAQSEVGYKEEDGVLAYILFPFVDGEGGVTIATTRPELLGATQAVAVNPDDERYKSLVGRKVKIPLFDKEISIIADKAVEMTFGTGAVMISTYGDPQDIRWQLTYRLPVYEVVDDKGKIKNTNGLLDGLTVKEARKKIIEILKEKGYLIKVEKITHNVLAHTERSDCLSPIEFLIKKQIYIKVLEWRNKLLEDYKKMKFTPQRMSYYLEEWIKNLEWDWNISRQRVYGTPLPFWYCDNGHLIPAPEEVLPIDPSKVNPPVEKCPHCGLDLKPVKDVADVWVDSSVTVLYLTGFYDDKSRFTKTFPSSLRLQGTDIIRTWLFYTYYRTLALAGNIPFKEVLINGQVLGPDGTRMSKSKGNVVSPLDKVDEYGADAIRLTLLDAKIGDDFPFKWDTVKSKKLLLQKLWNAGRLSYPFIGKKKINKPSKLHEIDKWILQEHKKFVQQSIEAYRNYDFYIVVESIYSYFWETIADEYLELIKHRLFMEDESAIYTLSRIIKDLLILLYPIAPHITEEMYERLYGDKMSIALENLPDTSDLEDDGEAQKLGEYIKKATSAIRTLKIQNRLAIPTPISVKIYGPDDFIAKIKIIEEDLKKTLKLIDIIYQENNEIKVELLSDHGS</sequence>
<name>SYV_SULAC</name>
<protein>
    <recommendedName>
        <fullName evidence="1">Valine--tRNA ligase</fullName>
        <ecNumber evidence="1">6.1.1.9</ecNumber>
    </recommendedName>
    <alternativeName>
        <fullName evidence="1">Valyl-tRNA synthetase</fullName>
        <shortName evidence="1">ValRS</shortName>
    </alternativeName>
</protein>
<organism>
    <name type="scientific">Sulfolobus acidocaldarius (strain ATCC 33909 / DSM 639 / JCM 8929 / NBRC 15157 / NCIMB 11770)</name>
    <dbReference type="NCBI Taxonomy" id="330779"/>
    <lineage>
        <taxon>Archaea</taxon>
        <taxon>Thermoproteota</taxon>
        <taxon>Thermoprotei</taxon>
        <taxon>Sulfolobales</taxon>
        <taxon>Sulfolobaceae</taxon>
        <taxon>Sulfolobus</taxon>
    </lineage>
</organism>
<reference key="1">
    <citation type="journal article" date="2005" name="J. Bacteriol.">
        <title>The genome of Sulfolobus acidocaldarius, a model organism of the Crenarchaeota.</title>
        <authorList>
            <person name="Chen L."/>
            <person name="Bruegger K."/>
            <person name="Skovgaard M."/>
            <person name="Redder P."/>
            <person name="She Q."/>
            <person name="Torarinsson E."/>
            <person name="Greve B."/>
            <person name="Awayez M."/>
            <person name="Zibat A."/>
            <person name="Klenk H.-P."/>
            <person name="Garrett R.A."/>
        </authorList>
    </citation>
    <scope>NUCLEOTIDE SEQUENCE [LARGE SCALE GENOMIC DNA]</scope>
    <source>
        <strain>ATCC 33909 / DSM 639 / JCM 8929 / NBRC 15157 / NCIMB 11770</strain>
    </source>
</reference>
<gene>
    <name evidence="1" type="primary">valS</name>
    <name type="ordered locus">Saci_1430</name>
</gene>